<keyword id="KW-1185">Reference proteome</keyword>
<keyword id="KW-0687">Ribonucleoprotein</keyword>
<keyword id="KW-0689">Ribosomal protein</keyword>
<keyword id="KW-0694">RNA-binding</keyword>
<keyword id="KW-0699">rRNA-binding</keyword>
<keyword id="KW-0820">tRNA-binding</keyword>
<dbReference type="EMBL" id="CP000822">
    <property type="protein sequence ID" value="ABV15772.1"/>
    <property type="molecule type" value="Genomic_DNA"/>
</dbReference>
<dbReference type="RefSeq" id="WP_000941212.1">
    <property type="nucleotide sequence ID" value="NC_009792.1"/>
</dbReference>
<dbReference type="SMR" id="A8AQK9"/>
<dbReference type="STRING" id="290338.CKO_04727"/>
<dbReference type="GeneID" id="93778674"/>
<dbReference type="KEGG" id="cko:CKO_04727"/>
<dbReference type="HOGENOM" id="CLU_078858_2_1_6"/>
<dbReference type="OrthoDB" id="9802589at2"/>
<dbReference type="Proteomes" id="UP000008148">
    <property type="component" value="Chromosome"/>
</dbReference>
<dbReference type="GO" id="GO:0022625">
    <property type="term" value="C:cytosolic large ribosomal subunit"/>
    <property type="evidence" value="ECO:0007669"/>
    <property type="project" value="TreeGrafter"/>
</dbReference>
<dbReference type="GO" id="GO:0019843">
    <property type="term" value="F:rRNA binding"/>
    <property type="evidence" value="ECO:0007669"/>
    <property type="project" value="UniProtKB-UniRule"/>
</dbReference>
<dbReference type="GO" id="GO:0003735">
    <property type="term" value="F:structural constituent of ribosome"/>
    <property type="evidence" value="ECO:0007669"/>
    <property type="project" value="InterPro"/>
</dbReference>
<dbReference type="GO" id="GO:0000049">
    <property type="term" value="F:tRNA binding"/>
    <property type="evidence" value="ECO:0007669"/>
    <property type="project" value="UniProtKB-KW"/>
</dbReference>
<dbReference type="GO" id="GO:0006412">
    <property type="term" value="P:translation"/>
    <property type="evidence" value="ECO:0007669"/>
    <property type="project" value="UniProtKB-UniRule"/>
</dbReference>
<dbReference type="CDD" id="cd01433">
    <property type="entry name" value="Ribosomal_L16_L10e"/>
    <property type="match status" value="1"/>
</dbReference>
<dbReference type="FunFam" id="3.90.1170.10:FF:000001">
    <property type="entry name" value="50S ribosomal protein L16"/>
    <property type="match status" value="1"/>
</dbReference>
<dbReference type="Gene3D" id="3.90.1170.10">
    <property type="entry name" value="Ribosomal protein L10e/L16"/>
    <property type="match status" value="1"/>
</dbReference>
<dbReference type="HAMAP" id="MF_01342">
    <property type="entry name" value="Ribosomal_uL16"/>
    <property type="match status" value="1"/>
</dbReference>
<dbReference type="InterPro" id="IPR047873">
    <property type="entry name" value="Ribosomal_uL16"/>
</dbReference>
<dbReference type="InterPro" id="IPR000114">
    <property type="entry name" value="Ribosomal_uL16_bact-type"/>
</dbReference>
<dbReference type="InterPro" id="IPR020798">
    <property type="entry name" value="Ribosomal_uL16_CS"/>
</dbReference>
<dbReference type="InterPro" id="IPR016180">
    <property type="entry name" value="Ribosomal_uL16_dom"/>
</dbReference>
<dbReference type="InterPro" id="IPR036920">
    <property type="entry name" value="Ribosomal_uL16_sf"/>
</dbReference>
<dbReference type="NCBIfam" id="TIGR01164">
    <property type="entry name" value="rplP_bact"/>
    <property type="match status" value="1"/>
</dbReference>
<dbReference type="PANTHER" id="PTHR12220">
    <property type="entry name" value="50S/60S RIBOSOMAL PROTEIN L16"/>
    <property type="match status" value="1"/>
</dbReference>
<dbReference type="PANTHER" id="PTHR12220:SF13">
    <property type="entry name" value="LARGE RIBOSOMAL SUBUNIT PROTEIN UL16M"/>
    <property type="match status" value="1"/>
</dbReference>
<dbReference type="Pfam" id="PF00252">
    <property type="entry name" value="Ribosomal_L16"/>
    <property type="match status" value="1"/>
</dbReference>
<dbReference type="PRINTS" id="PR00060">
    <property type="entry name" value="RIBOSOMALL16"/>
</dbReference>
<dbReference type="SUPFAM" id="SSF54686">
    <property type="entry name" value="Ribosomal protein L16p/L10e"/>
    <property type="match status" value="1"/>
</dbReference>
<dbReference type="PROSITE" id="PS00586">
    <property type="entry name" value="RIBOSOMAL_L16_1"/>
    <property type="match status" value="1"/>
</dbReference>
<dbReference type="PROSITE" id="PS00701">
    <property type="entry name" value="RIBOSOMAL_L16_2"/>
    <property type="match status" value="1"/>
</dbReference>
<proteinExistence type="inferred from homology"/>
<organism>
    <name type="scientific">Citrobacter koseri (strain ATCC BAA-895 / CDC 4225-83 / SGSC4696)</name>
    <dbReference type="NCBI Taxonomy" id="290338"/>
    <lineage>
        <taxon>Bacteria</taxon>
        <taxon>Pseudomonadati</taxon>
        <taxon>Pseudomonadota</taxon>
        <taxon>Gammaproteobacteria</taxon>
        <taxon>Enterobacterales</taxon>
        <taxon>Enterobacteriaceae</taxon>
        <taxon>Citrobacter</taxon>
    </lineage>
</organism>
<name>RL16_CITK8</name>
<protein>
    <recommendedName>
        <fullName evidence="1">Large ribosomal subunit protein uL16</fullName>
    </recommendedName>
    <alternativeName>
        <fullName evidence="2">50S ribosomal protein L16</fullName>
    </alternativeName>
</protein>
<comment type="function">
    <text evidence="1">Binds 23S rRNA and is also seen to make contacts with the A and possibly P site tRNAs.</text>
</comment>
<comment type="subunit">
    <text evidence="1">Part of the 50S ribosomal subunit.</text>
</comment>
<comment type="similarity">
    <text evidence="1">Belongs to the universal ribosomal protein uL16 family.</text>
</comment>
<accession>A8AQK9</accession>
<gene>
    <name evidence="1" type="primary">rplP</name>
    <name type="ordered locus">CKO_04727</name>
</gene>
<feature type="chain" id="PRO_1000054603" description="Large ribosomal subunit protein uL16">
    <location>
        <begin position="1"/>
        <end position="136"/>
    </location>
</feature>
<reference key="1">
    <citation type="submission" date="2007-08" db="EMBL/GenBank/DDBJ databases">
        <authorList>
            <consortium name="The Citrobacter koseri Genome Sequencing Project"/>
            <person name="McClelland M."/>
            <person name="Sanderson E.K."/>
            <person name="Porwollik S."/>
            <person name="Spieth J."/>
            <person name="Clifton W.S."/>
            <person name="Latreille P."/>
            <person name="Courtney L."/>
            <person name="Wang C."/>
            <person name="Pepin K."/>
            <person name="Bhonagiri V."/>
            <person name="Nash W."/>
            <person name="Johnson M."/>
            <person name="Thiruvilangam P."/>
            <person name="Wilson R."/>
        </authorList>
    </citation>
    <scope>NUCLEOTIDE SEQUENCE [LARGE SCALE GENOMIC DNA]</scope>
    <source>
        <strain>ATCC BAA-895 / CDC 4225-83 / SGSC4696</strain>
    </source>
</reference>
<sequence length="136" mass="15281">MLQPKRTKFRKMHKGRNRGLAQGTDVSFGSFGLKAVGRGRLTARQIEAARRAMTRAVKRQGKIWIRVFPDKPITEKPLAVRMGKGKGNVEYWVALIQPGKVLYEMDGVPEELAREAFKLAAAKLPIKTTFVTKTVM</sequence>
<evidence type="ECO:0000255" key="1">
    <source>
        <dbReference type="HAMAP-Rule" id="MF_01342"/>
    </source>
</evidence>
<evidence type="ECO:0000305" key="2"/>